<protein>
    <recommendedName>
        <fullName>Uncharacterized 7.4 kDa protein</fullName>
    </recommendedName>
</protein>
<keyword id="KW-1185">Reference proteome</keyword>
<sequence>MGVEVLGGIFSKRFTSIVGSFIWFIITPILLYLPWPLAMLGFLTLYGALPFGVGIVNWPYPRDACGC</sequence>
<name>YORR_TTV1K</name>
<accession>P19302</accession>
<proteinExistence type="predicted"/>
<dbReference type="EMBL" id="X14855">
    <property type="protein sequence ID" value="CAA32998.1"/>
    <property type="molecule type" value="Genomic_DNA"/>
</dbReference>
<dbReference type="Proteomes" id="UP000009250">
    <property type="component" value="Genome"/>
</dbReference>
<feature type="chain" id="PRO_0000222984" description="Uncharacterized 7.4 kDa protein">
    <location>
        <begin position="1"/>
        <end position="67"/>
    </location>
</feature>
<organism>
    <name type="scientific">Thermoproteus tenax virus 1 (strain KRA1)</name>
    <name type="common">TTV1</name>
    <dbReference type="NCBI Taxonomy" id="10480"/>
    <lineage>
        <taxon>Viruses</taxon>
        <taxon>Adnaviria</taxon>
        <taxon>Zilligvirae</taxon>
        <taxon>Taleaviricota</taxon>
        <taxon>Tokiviricetes</taxon>
        <taxon>Primavirales</taxon>
        <taxon>Tristromaviridae</taxon>
        <taxon>Betatristromavirus</taxon>
        <taxon>Betatristromavirus TTV1</taxon>
    </lineage>
</organism>
<organismHost>
    <name type="scientific">Thermoproteus tenax</name>
    <dbReference type="NCBI Taxonomy" id="2271"/>
</organismHost>
<reference key="1">
    <citation type="submission" date="1989-03" db="EMBL/GenBank/DDBJ databases">
        <authorList>
            <person name="Neumann H."/>
        </authorList>
    </citation>
    <scope>NUCLEOTIDE SEQUENCE [GENOMIC DNA]</scope>
</reference>